<comment type="function">
    <text evidence="1">Required in the presynaptic motoneuron to down-regulate the levels of wnd and restrain synaptic terminal growth at the neuromuscular junction (NMJ).</text>
</comment>
<comment type="pathway">
    <text evidence="2">Protein modification; protein ubiquitination.</text>
</comment>
<comment type="subunit">
    <text evidence="2">Component of an E3 ubiquitin ligase complex composed of hiw and Fsn.</text>
</comment>
<comment type="subcellular location">
    <subcellularLocation>
        <location evidence="2">Synapse</location>
    </subcellularLocation>
</comment>
<comment type="similarity">
    <text evidence="5">Belongs to the FBXO45/Fsn family.</text>
</comment>
<reference key="1">
    <citation type="journal article" date="2007" name="Science">
        <title>Genome sequence of Aedes aegypti, a major arbovirus vector.</title>
        <authorList>
            <person name="Nene V."/>
            <person name="Wortman J.R."/>
            <person name="Lawson D."/>
            <person name="Haas B.J."/>
            <person name="Kodira C.D."/>
            <person name="Tu Z.J."/>
            <person name="Loftus B.J."/>
            <person name="Xi Z."/>
            <person name="Megy K."/>
            <person name="Grabherr M."/>
            <person name="Ren Q."/>
            <person name="Zdobnov E.M."/>
            <person name="Lobo N.F."/>
            <person name="Campbell K.S."/>
            <person name="Brown S.E."/>
            <person name="Bonaldo M.F."/>
            <person name="Zhu J."/>
            <person name="Sinkins S.P."/>
            <person name="Hogenkamp D.G."/>
            <person name="Amedeo P."/>
            <person name="Arensburger P."/>
            <person name="Atkinson P.W."/>
            <person name="Bidwell S.L."/>
            <person name="Biedler J."/>
            <person name="Birney E."/>
            <person name="Bruggner R.V."/>
            <person name="Costas J."/>
            <person name="Coy M.R."/>
            <person name="Crabtree J."/>
            <person name="Crawford M."/>
            <person name="DeBruyn B."/>
            <person name="DeCaprio D."/>
            <person name="Eiglmeier K."/>
            <person name="Eisenstadt E."/>
            <person name="El-Dorry H."/>
            <person name="Gelbart W.M."/>
            <person name="Gomes S.L."/>
            <person name="Hammond M."/>
            <person name="Hannick L.I."/>
            <person name="Hogan J.R."/>
            <person name="Holmes M.H."/>
            <person name="Jaffe D."/>
            <person name="Johnston S.J."/>
            <person name="Kennedy R.C."/>
            <person name="Koo H."/>
            <person name="Kravitz S."/>
            <person name="Kriventseva E.V."/>
            <person name="Kulp D."/>
            <person name="Labutti K."/>
            <person name="Lee E."/>
            <person name="Li S."/>
            <person name="Lovin D.D."/>
            <person name="Mao C."/>
            <person name="Mauceli E."/>
            <person name="Menck C.F."/>
            <person name="Miller J.R."/>
            <person name="Montgomery P."/>
            <person name="Mori A."/>
            <person name="Nascimento A.L."/>
            <person name="Naveira H.F."/>
            <person name="Nusbaum C."/>
            <person name="O'Leary S.B."/>
            <person name="Orvis J."/>
            <person name="Pertea M."/>
            <person name="Quesneville H."/>
            <person name="Reidenbach K.R."/>
            <person name="Rogers Y.-H.C."/>
            <person name="Roth C.W."/>
            <person name="Schneider J.R."/>
            <person name="Schatz M."/>
            <person name="Shumway M."/>
            <person name="Stanke M."/>
            <person name="Stinson E.O."/>
            <person name="Tubio J.M.C."/>
            <person name="Vanzee J.P."/>
            <person name="Verjovski-Almeida S."/>
            <person name="Werner D."/>
            <person name="White O.R."/>
            <person name="Wyder S."/>
            <person name="Zeng Q."/>
            <person name="Zhao Q."/>
            <person name="Zhao Y."/>
            <person name="Hill C.A."/>
            <person name="Raikhel A.S."/>
            <person name="Soares M.B."/>
            <person name="Knudson D.L."/>
            <person name="Lee N.H."/>
            <person name="Galagan J."/>
            <person name="Salzberg S.L."/>
            <person name="Paulsen I.T."/>
            <person name="Dimopoulos G."/>
            <person name="Collins F.H."/>
            <person name="Bruce B."/>
            <person name="Fraser-Liggett C.M."/>
            <person name="Severson D.W."/>
        </authorList>
    </citation>
    <scope>NUCLEOTIDE SEQUENCE [LARGE SCALE GENOMIC DNA]</scope>
    <source>
        <strain>LVPib12</strain>
    </source>
</reference>
<evidence type="ECO:0000250" key="1"/>
<evidence type="ECO:0000250" key="2">
    <source>
        <dbReference type="UniProtKB" id="Q9V6L9"/>
    </source>
</evidence>
<evidence type="ECO:0000255" key="3">
    <source>
        <dbReference type="PROSITE-ProRule" id="PRU00080"/>
    </source>
</evidence>
<evidence type="ECO:0000255" key="4">
    <source>
        <dbReference type="PROSITE-ProRule" id="PRU00548"/>
    </source>
</evidence>
<evidence type="ECO:0000305" key="5"/>
<protein>
    <recommendedName>
        <fullName evidence="2">F-box/SPRY domain-containing protein 1</fullName>
    </recommendedName>
</protein>
<sequence>MDDDLTEYAPDIPDNVLELIFSYLKLQDLRNCSLVCKSWNRFLNDENNEVWRAQCMQKLSPDAFKTDLLSVVPTYKAKLRAFFHAWNPYDCSRHVYIKPNGFTLHRNPVAQSTDGSRGKIGFQHGRHAWEVRWEGPLGTVAVVGIATKDAAIQCHGYYALLGADDQSWGWNLVDNLLLHNGDAHGIYPLLNNAPKYKVGERIRVILDCDDNTLSFEKNYEFLGVAFTDLPDKVFYPTVAAVYGNTEISMVYLGPPLDG</sequence>
<name>FBSP1_AEDAE</name>
<feature type="chain" id="PRO_0000383307" description="F-box/SPRY domain-containing protein 1">
    <location>
        <begin position="1"/>
        <end position="258"/>
    </location>
</feature>
<feature type="domain" description="F-box" evidence="3">
    <location>
        <begin position="6"/>
        <end position="54"/>
    </location>
</feature>
<feature type="domain" description="B30.2/SPRY" evidence="4">
    <location>
        <begin position="64"/>
        <end position="256"/>
    </location>
</feature>
<organism>
    <name type="scientific">Aedes aegypti</name>
    <name type="common">Yellowfever mosquito</name>
    <name type="synonym">Culex aegypti</name>
    <dbReference type="NCBI Taxonomy" id="7159"/>
    <lineage>
        <taxon>Eukaryota</taxon>
        <taxon>Metazoa</taxon>
        <taxon>Ecdysozoa</taxon>
        <taxon>Arthropoda</taxon>
        <taxon>Hexapoda</taxon>
        <taxon>Insecta</taxon>
        <taxon>Pterygota</taxon>
        <taxon>Neoptera</taxon>
        <taxon>Endopterygota</taxon>
        <taxon>Diptera</taxon>
        <taxon>Nematocera</taxon>
        <taxon>Culicoidea</taxon>
        <taxon>Culicidae</taxon>
        <taxon>Culicinae</taxon>
        <taxon>Aedini</taxon>
        <taxon>Aedes</taxon>
        <taxon>Stegomyia</taxon>
    </lineage>
</organism>
<accession>Q16XV7</accession>
<gene>
    <name evidence="2" type="primary">Fsn</name>
    <name type="ORF">AAEL008758</name>
</gene>
<proteinExistence type="inferred from homology"/>
<keyword id="KW-0524">Neurogenesis</keyword>
<keyword id="KW-1185">Reference proteome</keyword>
<keyword id="KW-0770">Synapse</keyword>
<keyword id="KW-0833">Ubl conjugation pathway</keyword>
<dbReference type="EMBL" id="CH477532">
    <property type="protein sequence ID" value="EAT39436.1"/>
    <property type="molecule type" value="Genomic_DNA"/>
</dbReference>
<dbReference type="RefSeq" id="XP_001659457.1">
    <property type="nucleotide sequence ID" value="XM_001659407.1"/>
</dbReference>
<dbReference type="SMR" id="Q16XV7"/>
<dbReference type="FunCoup" id="Q16XV7">
    <property type="interactions" value="1181"/>
</dbReference>
<dbReference type="STRING" id="7159.Q16XV7"/>
<dbReference type="PaxDb" id="7159-AAEL008758-PA"/>
<dbReference type="GeneID" id="5571026"/>
<dbReference type="KEGG" id="aag:5571026"/>
<dbReference type="CTD" id="36460"/>
<dbReference type="VEuPathDB" id="VectorBase:AAEL008758"/>
<dbReference type="eggNOG" id="KOG3953">
    <property type="taxonomic scope" value="Eukaryota"/>
</dbReference>
<dbReference type="HOGENOM" id="CLU_046756_1_0_1"/>
<dbReference type="InParanoid" id="Q16XV7"/>
<dbReference type="OMA" id="ATKRASM"/>
<dbReference type="OrthoDB" id="2398163at2759"/>
<dbReference type="PhylomeDB" id="Q16XV7"/>
<dbReference type="UniPathway" id="UPA00143"/>
<dbReference type="Proteomes" id="UP000008820">
    <property type="component" value="Unassembled WGS sequence"/>
</dbReference>
<dbReference type="Proteomes" id="UP000682892">
    <property type="component" value="Unassembled WGS sequence"/>
</dbReference>
<dbReference type="GO" id="GO:0031594">
    <property type="term" value="C:neuromuscular junction"/>
    <property type="evidence" value="ECO:0000250"/>
    <property type="project" value="UniProtKB"/>
</dbReference>
<dbReference type="GO" id="GO:0019005">
    <property type="term" value="C:SCF ubiquitin ligase complex"/>
    <property type="evidence" value="ECO:0007669"/>
    <property type="project" value="TreeGrafter"/>
</dbReference>
<dbReference type="GO" id="GO:0045886">
    <property type="term" value="P:negative regulation of synaptic assembly at neuromuscular junction"/>
    <property type="evidence" value="ECO:0000250"/>
    <property type="project" value="UniProtKB"/>
</dbReference>
<dbReference type="GO" id="GO:0007274">
    <property type="term" value="P:neuromuscular synaptic transmission"/>
    <property type="evidence" value="ECO:0000250"/>
    <property type="project" value="UniProtKB"/>
</dbReference>
<dbReference type="GO" id="GO:0043161">
    <property type="term" value="P:proteasome-mediated ubiquitin-dependent protein catabolic process"/>
    <property type="evidence" value="ECO:0007669"/>
    <property type="project" value="TreeGrafter"/>
</dbReference>
<dbReference type="GO" id="GO:0016567">
    <property type="term" value="P:protein ubiquitination"/>
    <property type="evidence" value="ECO:0007669"/>
    <property type="project" value="UniProtKB-UniPathway"/>
</dbReference>
<dbReference type="GO" id="GO:0060386">
    <property type="term" value="P:synapse assembly involved in innervation"/>
    <property type="evidence" value="ECO:0007669"/>
    <property type="project" value="TreeGrafter"/>
</dbReference>
<dbReference type="CDD" id="cd22111">
    <property type="entry name" value="F-box_FBXO45"/>
    <property type="match status" value="1"/>
</dbReference>
<dbReference type="CDD" id="cd12907">
    <property type="entry name" value="SPRY_Fbox"/>
    <property type="match status" value="1"/>
</dbReference>
<dbReference type="FunFam" id="1.20.1280.50:FF:000055">
    <property type="entry name" value="F-box/SPRY domain-containing protein 1"/>
    <property type="match status" value="1"/>
</dbReference>
<dbReference type="FunFam" id="2.60.120.920:FF:000017">
    <property type="entry name" value="F-box/SPRY domain-containing protein 1"/>
    <property type="match status" value="1"/>
</dbReference>
<dbReference type="Gene3D" id="1.20.1280.50">
    <property type="match status" value="1"/>
</dbReference>
<dbReference type="Gene3D" id="2.60.120.920">
    <property type="match status" value="1"/>
</dbReference>
<dbReference type="InterPro" id="IPR001870">
    <property type="entry name" value="B30.2/SPRY"/>
</dbReference>
<dbReference type="InterPro" id="IPR043136">
    <property type="entry name" value="B30.2/SPRY_sf"/>
</dbReference>
<dbReference type="InterPro" id="IPR013320">
    <property type="entry name" value="ConA-like_dom_sf"/>
</dbReference>
<dbReference type="InterPro" id="IPR036047">
    <property type="entry name" value="F-box-like_dom_sf"/>
</dbReference>
<dbReference type="InterPro" id="IPR001810">
    <property type="entry name" value="F-box_dom"/>
</dbReference>
<dbReference type="InterPro" id="IPR050672">
    <property type="entry name" value="FBXO45-Fsn/SPSB_families"/>
</dbReference>
<dbReference type="InterPro" id="IPR003877">
    <property type="entry name" value="SPRY_dom"/>
</dbReference>
<dbReference type="InterPro" id="IPR035784">
    <property type="entry name" value="SPRY_FBXO45"/>
</dbReference>
<dbReference type="PANTHER" id="PTHR12245:SF7">
    <property type="entry name" value="F-BOX_SPRY DOMAIN-CONTAINING PROTEIN 1"/>
    <property type="match status" value="1"/>
</dbReference>
<dbReference type="PANTHER" id="PTHR12245">
    <property type="entry name" value="SPRY DOMAIN CONTAINING SOCS BOX PROTEIN"/>
    <property type="match status" value="1"/>
</dbReference>
<dbReference type="Pfam" id="PF12937">
    <property type="entry name" value="F-box-like"/>
    <property type="match status" value="1"/>
</dbReference>
<dbReference type="Pfam" id="PF00622">
    <property type="entry name" value="SPRY"/>
    <property type="match status" value="1"/>
</dbReference>
<dbReference type="SMART" id="SM00256">
    <property type="entry name" value="FBOX"/>
    <property type="match status" value="1"/>
</dbReference>
<dbReference type="SMART" id="SM00449">
    <property type="entry name" value="SPRY"/>
    <property type="match status" value="1"/>
</dbReference>
<dbReference type="SUPFAM" id="SSF49899">
    <property type="entry name" value="Concanavalin A-like lectins/glucanases"/>
    <property type="match status" value="1"/>
</dbReference>
<dbReference type="SUPFAM" id="SSF81383">
    <property type="entry name" value="F-box domain"/>
    <property type="match status" value="1"/>
</dbReference>
<dbReference type="PROSITE" id="PS50188">
    <property type="entry name" value="B302_SPRY"/>
    <property type="match status" value="1"/>
</dbReference>
<dbReference type="PROSITE" id="PS50181">
    <property type="entry name" value="FBOX"/>
    <property type="match status" value="1"/>
</dbReference>